<reference key="1">
    <citation type="journal article" date="2004" name="Nucleic Acids Res.">
        <title>The genome sequence of Bacillus cereus ATCC 10987 reveals metabolic adaptations and a large plasmid related to Bacillus anthracis pXO1.</title>
        <authorList>
            <person name="Rasko D.A."/>
            <person name="Ravel J."/>
            <person name="Oekstad O.A."/>
            <person name="Helgason E."/>
            <person name="Cer R.Z."/>
            <person name="Jiang L."/>
            <person name="Shores K.A."/>
            <person name="Fouts D.E."/>
            <person name="Tourasse N.J."/>
            <person name="Angiuoli S.V."/>
            <person name="Kolonay J.F."/>
            <person name="Nelson W.C."/>
            <person name="Kolstoe A.-B."/>
            <person name="Fraser C.M."/>
            <person name="Read T.D."/>
        </authorList>
    </citation>
    <scope>NUCLEOTIDE SEQUENCE [LARGE SCALE GENOMIC DNA]</scope>
    <source>
        <strain>ATCC 10987 / NRS 248</strain>
    </source>
</reference>
<proteinExistence type="inferred from homology"/>
<accession>Q72XA0</accession>
<evidence type="ECO:0000250" key="1"/>
<evidence type="ECO:0000255" key="2">
    <source>
        <dbReference type="HAMAP-Rule" id="MF_00606"/>
    </source>
</evidence>
<organism>
    <name type="scientific">Bacillus cereus (strain ATCC 10987 / NRS 248)</name>
    <dbReference type="NCBI Taxonomy" id="222523"/>
    <lineage>
        <taxon>Bacteria</taxon>
        <taxon>Bacillati</taxon>
        <taxon>Bacillota</taxon>
        <taxon>Bacilli</taxon>
        <taxon>Bacillales</taxon>
        <taxon>Bacillaceae</taxon>
        <taxon>Bacillus</taxon>
        <taxon>Bacillus cereus group</taxon>
    </lineage>
</organism>
<gene>
    <name evidence="2" type="primary">uvsE</name>
    <name type="ordered locus">BCE_5478</name>
</gene>
<keyword id="KW-0227">DNA damage</keyword>
<keyword id="KW-0228">DNA excision</keyword>
<keyword id="KW-0234">DNA repair</keyword>
<keyword id="KW-0255">Endonuclease</keyword>
<keyword id="KW-0378">Hydrolase</keyword>
<keyword id="KW-0540">Nuclease</keyword>
<name>UVSE_BACC1</name>
<feature type="chain" id="PRO_1000006544" description="UV DNA damage endonuclease">
    <location>
        <begin position="1"/>
        <end position="317"/>
    </location>
</feature>
<protein>
    <recommendedName>
        <fullName evidence="2">UV DNA damage endonuclease</fullName>
        <shortName evidence="2">UV-endonuclease</shortName>
        <shortName evidence="2">UVED</shortName>
        <ecNumber evidence="2">3.-.-.-</ecNumber>
    </recommendedName>
</protein>
<dbReference type="EC" id="3.-.-.-" evidence="2"/>
<dbReference type="EMBL" id="AE017194">
    <property type="protein sequence ID" value="AAS44378.1"/>
    <property type="molecule type" value="Genomic_DNA"/>
</dbReference>
<dbReference type="SMR" id="Q72XA0"/>
<dbReference type="KEGG" id="bca:BCE_5478"/>
<dbReference type="HOGENOM" id="CLU_017168_0_1_9"/>
<dbReference type="Proteomes" id="UP000002527">
    <property type="component" value="Chromosome"/>
</dbReference>
<dbReference type="GO" id="GO:0004519">
    <property type="term" value="F:endonuclease activity"/>
    <property type="evidence" value="ECO:0007669"/>
    <property type="project" value="UniProtKB-UniRule"/>
</dbReference>
<dbReference type="GO" id="GO:0006289">
    <property type="term" value="P:nucleotide-excision repair"/>
    <property type="evidence" value="ECO:0007669"/>
    <property type="project" value="InterPro"/>
</dbReference>
<dbReference type="GO" id="GO:0006290">
    <property type="term" value="P:pyrimidine dimer repair"/>
    <property type="evidence" value="ECO:0007669"/>
    <property type="project" value="UniProtKB-UniRule"/>
</dbReference>
<dbReference type="GO" id="GO:0009411">
    <property type="term" value="P:response to UV"/>
    <property type="evidence" value="ECO:0007669"/>
    <property type="project" value="InterPro"/>
</dbReference>
<dbReference type="Gene3D" id="3.20.20.150">
    <property type="entry name" value="Divalent-metal-dependent TIM barrel enzymes"/>
    <property type="match status" value="1"/>
</dbReference>
<dbReference type="HAMAP" id="MF_00606">
    <property type="entry name" value="UV_endonuclease"/>
    <property type="match status" value="1"/>
</dbReference>
<dbReference type="InterPro" id="IPR004601">
    <property type="entry name" value="UvdE"/>
</dbReference>
<dbReference type="InterPro" id="IPR023520">
    <property type="entry name" value="UvdE_bac"/>
</dbReference>
<dbReference type="InterPro" id="IPR036237">
    <property type="entry name" value="Xyl_isomerase-like_sf"/>
</dbReference>
<dbReference type="NCBIfam" id="TIGR00629">
    <property type="entry name" value="uvde"/>
    <property type="match status" value="1"/>
</dbReference>
<dbReference type="PANTHER" id="PTHR31290">
    <property type="entry name" value="UV-DAMAGE ENDONUCLEASE"/>
    <property type="match status" value="1"/>
</dbReference>
<dbReference type="PANTHER" id="PTHR31290:SF5">
    <property type="entry name" value="UV-DAMAGE ENDONUCLEASE"/>
    <property type="match status" value="1"/>
</dbReference>
<dbReference type="Pfam" id="PF03851">
    <property type="entry name" value="UvdE"/>
    <property type="match status" value="1"/>
</dbReference>
<dbReference type="SUPFAM" id="SSF51658">
    <property type="entry name" value="Xylose isomerase-like"/>
    <property type="match status" value="1"/>
</dbReference>
<comment type="function">
    <text evidence="1">Component in a DNA repair pathway. Removal of UV LIGHT damaged nucleotides. Recognizes pyrimidine dimers and cleave a phosphodiester bond immediately 5' to the lesion (By similarity).</text>
</comment>
<comment type="similarity">
    <text evidence="2">Belongs to the uve1/UvsE family.</text>
</comment>
<sequence length="317" mass="36971">MIMRFGYVSHAMALWDCSPAKTMTFTSFQKLSKQEREDKLYDVTRQNLEHTIRILHYNIAHEIPLYRLSSSIVPLATHPEVEFDYIGLFTPLWRKIGALIKEHNLRVSFHPNQFTLFTSDKPHITTNAITDMTYHYKVLDAIGIADSSYINIHVGGAYGNKEKAVERFHENIKKLPAHIKRQMTLENDDKTYTTAETLSICQKEKIPFVFDYHHHMANLCEEPLEELLPAIFETWAHTNILPKVHISSPKSKKEFRAHAEYIDLEFIKPFLHVAKKVNHNFDIMIESKQKDLAMLQFIHELSAIRGIKRINSSTLQW</sequence>